<name>DCMM_HYDPS</name>
<sequence length="287" mass="30722">MIPPRFEYHAPKSVGEAVALLGQLGSDAKLLAGGHSLLPMMKLRFAQPEHLIDINRIPELRGIREEGSTVVIGAMTVENDLISSPIVQARLPLLAEAAKLIADPQVRNRGTIGGDIAHGHPGNDHPALSIAVEAHFVLEGPNGRRTVPADGFFLGTYMTLLEENEVMVEIRVPAFAQGTGWAYEKLKRKTGDWATAGCAVVMRKSGNTVSHIRIALTNVAPTALRREGGRSRLLGKAFTKEAVQAAADAAIAICEPAEDLRGDADYKTAMAGQMVKRALNAAWARCA</sequence>
<proteinExistence type="evidence at protein level"/>
<organism>
    <name type="scientific">Hydrogenophaga pseudoflava</name>
    <name type="common">Pseudomonas carboxydoflava</name>
    <dbReference type="NCBI Taxonomy" id="47421"/>
    <lineage>
        <taxon>Bacteria</taxon>
        <taxon>Pseudomonadati</taxon>
        <taxon>Pseudomonadota</taxon>
        <taxon>Betaproteobacteria</taxon>
        <taxon>Burkholderiales</taxon>
        <taxon>Comamonadaceae</taxon>
        <taxon>Hydrogenophaga</taxon>
    </lineage>
</organism>
<feature type="chain" id="PRO_0000079812" description="Carbon monoxide dehydrogenase medium chain">
    <location>
        <begin position="1"/>
        <end position="287"/>
    </location>
</feature>
<feature type="domain" description="FAD-binding PCMH-type" evidence="2">
    <location>
        <begin position="1"/>
        <end position="177"/>
    </location>
</feature>
<feature type="binding site">
    <location>
        <begin position="32"/>
        <end position="36"/>
    </location>
    <ligand>
        <name>FAD</name>
        <dbReference type="ChEBI" id="CHEBI:57692"/>
    </ligand>
</feature>
<feature type="binding site">
    <location>
        <begin position="111"/>
        <end position="115"/>
    </location>
    <ligand>
        <name>FAD</name>
        <dbReference type="ChEBI" id="CHEBI:57692"/>
    </ligand>
</feature>
<feature type="sequence conflict" description="In Ref. 2; AA sequence." evidence="4" ref="2">
    <original>IP</original>
    <variation>MI</variation>
    <location>
        <begin position="2"/>
        <end position="3"/>
    </location>
</feature>
<feature type="sequence conflict" description="In Ref. 2; AA sequence." evidence="4" ref="2">
    <original>S</original>
    <variation>H</variation>
    <location>
        <position position="13"/>
    </location>
</feature>
<feature type="strand" evidence="5">
    <location>
        <begin position="7"/>
        <end position="9"/>
    </location>
</feature>
<feature type="helix" evidence="5">
    <location>
        <begin position="14"/>
        <end position="24"/>
    </location>
</feature>
<feature type="helix" evidence="5">
    <location>
        <begin position="25"/>
        <end position="27"/>
    </location>
</feature>
<feature type="strand" evidence="5">
    <location>
        <begin position="28"/>
        <end position="33"/>
    </location>
</feature>
<feature type="helix" evidence="5">
    <location>
        <begin position="37"/>
        <end position="42"/>
    </location>
</feature>
<feature type="strand" evidence="5">
    <location>
        <begin position="49"/>
        <end position="53"/>
    </location>
</feature>
<feature type="helix" evidence="5">
    <location>
        <begin position="58"/>
        <end position="60"/>
    </location>
</feature>
<feature type="strand" evidence="5">
    <location>
        <begin position="63"/>
        <end position="66"/>
    </location>
</feature>
<feature type="strand" evidence="5">
    <location>
        <begin position="69"/>
        <end position="73"/>
    </location>
</feature>
<feature type="helix" evidence="5">
    <location>
        <begin position="78"/>
        <end position="83"/>
    </location>
</feature>
<feature type="helix" evidence="5">
    <location>
        <begin position="85"/>
        <end position="90"/>
    </location>
</feature>
<feature type="helix" evidence="5">
    <location>
        <begin position="92"/>
        <end position="97"/>
    </location>
</feature>
<feature type="helix" evidence="5">
    <location>
        <begin position="98"/>
        <end position="100"/>
    </location>
</feature>
<feature type="helix" evidence="5">
    <location>
        <begin position="106"/>
        <end position="108"/>
    </location>
</feature>
<feature type="helix" evidence="5">
    <location>
        <begin position="112"/>
        <end position="117"/>
    </location>
</feature>
<feature type="helix" evidence="5">
    <location>
        <begin position="125"/>
        <end position="131"/>
    </location>
</feature>
<feature type="strand" evidence="5">
    <location>
        <begin position="135"/>
        <end position="140"/>
    </location>
</feature>
<feature type="strand" evidence="5">
    <location>
        <begin position="143"/>
        <end position="149"/>
    </location>
</feature>
<feature type="strand" evidence="5">
    <location>
        <begin position="153"/>
        <end position="155"/>
    </location>
</feature>
<feature type="strand" evidence="5">
    <location>
        <begin position="158"/>
        <end position="160"/>
    </location>
</feature>
<feature type="strand" evidence="5">
    <location>
        <begin position="166"/>
        <end position="173"/>
    </location>
</feature>
<feature type="strand" evidence="5">
    <location>
        <begin position="180"/>
        <end position="186"/>
    </location>
</feature>
<feature type="strand" evidence="5">
    <location>
        <begin position="195"/>
        <end position="205"/>
    </location>
</feature>
<feature type="strand" evidence="5">
    <location>
        <begin position="208"/>
        <end position="222"/>
    </location>
</feature>
<feature type="helix" evidence="5">
    <location>
        <begin position="227"/>
        <end position="231"/>
    </location>
</feature>
<feature type="helix" evidence="5">
    <location>
        <begin position="240"/>
        <end position="252"/>
    </location>
</feature>
<feature type="helix" evidence="5">
    <location>
        <begin position="264"/>
        <end position="285"/>
    </location>
</feature>
<dbReference type="EC" id="1.2.5.3" evidence="1"/>
<dbReference type="EMBL" id="U80806">
    <property type="protein sequence ID" value="AAD00361.1"/>
    <property type="molecule type" value="Genomic_DNA"/>
</dbReference>
<dbReference type="PDB" id="1FFU">
    <property type="method" value="X-ray"/>
    <property type="resolution" value="2.35 A"/>
    <property type="chains" value="C/F=1-287"/>
</dbReference>
<dbReference type="PDB" id="1FFV">
    <property type="method" value="X-ray"/>
    <property type="resolution" value="2.25 A"/>
    <property type="chains" value="C/F=1-287"/>
</dbReference>
<dbReference type="PDBsum" id="1FFU"/>
<dbReference type="PDBsum" id="1FFV"/>
<dbReference type="SMR" id="P19914"/>
<dbReference type="BRENDA" id="1.2.5.3">
    <property type="organism ID" value="2729"/>
</dbReference>
<dbReference type="EvolutionaryTrace" id="P19914"/>
<dbReference type="GO" id="GO:0043885">
    <property type="term" value="F:anaerobic carbon-monoxide dehydrogenase activity"/>
    <property type="evidence" value="ECO:0000314"/>
    <property type="project" value="CACAO"/>
</dbReference>
<dbReference type="GO" id="GO:0008805">
    <property type="term" value="F:carbon-monoxide oxygenase activity"/>
    <property type="evidence" value="ECO:0007669"/>
    <property type="project" value="UniProtKB-EC"/>
</dbReference>
<dbReference type="GO" id="GO:0071949">
    <property type="term" value="F:FAD binding"/>
    <property type="evidence" value="ECO:0007669"/>
    <property type="project" value="InterPro"/>
</dbReference>
<dbReference type="FunFam" id="3.30.43.10:FF:000015">
    <property type="entry name" value="Carbon monoxide dehydrogenase medium chain"/>
    <property type="match status" value="1"/>
</dbReference>
<dbReference type="FunFam" id="3.30.390.50:FF:000004">
    <property type="entry name" value="Xanthine dehydrogenase, FAD binding subunit"/>
    <property type="match status" value="1"/>
</dbReference>
<dbReference type="FunFam" id="3.30.465.10:FF:000017">
    <property type="entry name" value="Xanthine dehydrogenase, FAD binding subunit"/>
    <property type="match status" value="1"/>
</dbReference>
<dbReference type="Gene3D" id="3.30.465.10">
    <property type="match status" value="1"/>
</dbReference>
<dbReference type="Gene3D" id="3.30.390.50">
    <property type="entry name" value="CO dehydrogenase flavoprotein, C-terminal domain"/>
    <property type="match status" value="1"/>
</dbReference>
<dbReference type="Gene3D" id="3.30.43.10">
    <property type="entry name" value="Uridine Diphospho-n-acetylenolpyruvylglucosamine Reductase, domain 2"/>
    <property type="match status" value="1"/>
</dbReference>
<dbReference type="InterPro" id="IPR005107">
    <property type="entry name" value="CO_DH_flav_C"/>
</dbReference>
<dbReference type="InterPro" id="IPR036683">
    <property type="entry name" value="CO_DH_flav_C_dom_sf"/>
</dbReference>
<dbReference type="InterPro" id="IPR051312">
    <property type="entry name" value="Diverse_Substr_Oxidored"/>
</dbReference>
<dbReference type="InterPro" id="IPR016166">
    <property type="entry name" value="FAD-bd_PCMH"/>
</dbReference>
<dbReference type="InterPro" id="IPR036318">
    <property type="entry name" value="FAD-bd_PCMH-like_sf"/>
</dbReference>
<dbReference type="InterPro" id="IPR016167">
    <property type="entry name" value="FAD-bd_PCMH_sub1"/>
</dbReference>
<dbReference type="InterPro" id="IPR016169">
    <property type="entry name" value="FAD-bd_PCMH_sub2"/>
</dbReference>
<dbReference type="InterPro" id="IPR002346">
    <property type="entry name" value="Mopterin_DH_FAD-bd"/>
</dbReference>
<dbReference type="PANTHER" id="PTHR42659">
    <property type="entry name" value="XANTHINE DEHYDROGENASE SUBUNIT C-RELATED"/>
    <property type="match status" value="1"/>
</dbReference>
<dbReference type="PANTHER" id="PTHR42659:SF2">
    <property type="entry name" value="XANTHINE DEHYDROGENASE SUBUNIT C-RELATED"/>
    <property type="match status" value="1"/>
</dbReference>
<dbReference type="Pfam" id="PF03450">
    <property type="entry name" value="CO_deh_flav_C"/>
    <property type="match status" value="1"/>
</dbReference>
<dbReference type="Pfam" id="PF00941">
    <property type="entry name" value="FAD_binding_5"/>
    <property type="match status" value="1"/>
</dbReference>
<dbReference type="SMART" id="SM01092">
    <property type="entry name" value="CO_deh_flav_C"/>
    <property type="match status" value="1"/>
</dbReference>
<dbReference type="SUPFAM" id="SSF55447">
    <property type="entry name" value="CO dehydrogenase flavoprotein C-terminal domain-like"/>
    <property type="match status" value="1"/>
</dbReference>
<dbReference type="SUPFAM" id="SSF56176">
    <property type="entry name" value="FAD-binding/transporter-associated domain-like"/>
    <property type="match status" value="1"/>
</dbReference>
<dbReference type="PROSITE" id="PS51387">
    <property type="entry name" value="FAD_PCMH"/>
    <property type="match status" value="1"/>
</dbReference>
<gene>
    <name type="primary">cutM</name>
</gene>
<evidence type="ECO:0000250" key="1">
    <source>
        <dbReference type="UniProtKB" id="P19920"/>
    </source>
</evidence>
<evidence type="ECO:0000255" key="2">
    <source>
        <dbReference type="PROSITE-ProRule" id="PRU00718"/>
    </source>
</evidence>
<evidence type="ECO:0000269" key="3">
    <source>
    </source>
</evidence>
<evidence type="ECO:0000305" key="4"/>
<evidence type="ECO:0007829" key="5">
    <source>
        <dbReference type="PDB" id="1FFV"/>
    </source>
</evidence>
<reference key="1">
    <citation type="journal article" date="1999" name="J. Bacteriol.">
        <title>Cloning and molecular characterization of the genes for carbon monoxide dehydrogenase and localization of molybdopterin, flavin adenine dinucleotide, and iron-sulfur centers in the enzyme of Hydrogenophaga pseudoflava.</title>
        <authorList>
            <person name="Kang B.S."/>
            <person name="Kim Y.M."/>
        </authorList>
    </citation>
    <scope>NUCLEOTIDE SEQUENCE [GENOMIC DNA]</scope>
    <scope>COFACTOR</scope>
    <scope>SUBUNIT</scope>
</reference>
<reference key="2">
    <citation type="journal article" date="1989" name="Arch. Microbiol.">
        <title>Homology and distribution of CO dehydrogenase structural genes in carboxydotrophic bacteria.</title>
        <authorList>
            <person name="Kraut M."/>
            <person name="Hugendieck I."/>
            <person name="Herwig S."/>
            <person name="Meyer O."/>
        </authorList>
    </citation>
    <scope>PROTEIN SEQUENCE OF 1-14</scope>
</reference>
<reference key="3">
    <citation type="journal article" date="2000" name="J. Mol. Biol.">
        <title>The effect of intracellular molybdenum in Hydrogenophaga pseudoflava on the crystallographic structure of the seleno-molybdo-iron-sulfur flavoenzyme carbon monoxide dehydrogenase.</title>
        <authorList>
            <person name="Haenzelmann P."/>
            <person name="Dobbek H."/>
            <person name="Gremer L."/>
            <person name="Huber R."/>
            <person name="Meyer O."/>
        </authorList>
    </citation>
    <scope>X-RAY CRYSTALLOGRAPHY (2.25 ANGSTROMS)</scope>
</reference>
<reference key="4">
    <citation type="journal article" date="2000" name="Biol. Chem.">
        <title>The role of Se, Mo and Fe in the structure and function of carbon monoxide dehydrogenase.</title>
        <authorList>
            <person name="Meyer O."/>
            <person name="Gremer L."/>
            <person name="Ferner R."/>
            <person name="Ferner M."/>
            <person name="Dobbek H."/>
            <person name="Gnida M."/>
            <person name="Meyer-Klaucke W."/>
            <person name="Huber R."/>
        </authorList>
    </citation>
    <scope>REVIEW</scope>
</reference>
<accession>P19914</accession>
<accession>Q9ZAR7</accession>
<keyword id="KW-0002">3D-structure</keyword>
<keyword id="KW-0903">Direct protein sequencing</keyword>
<keyword id="KW-0274">FAD</keyword>
<keyword id="KW-0285">Flavoprotein</keyword>
<keyword id="KW-0560">Oxidoreductase</keyword>
<comment type="function">
    <text evidence="1">Catalyzes the oxidation of carbon monoxide to carbon dioxide.</text>
</comment>
<comment type="catalytic activity">
    <reaction evidence="1">
        <text>CO + a quinone + H2O = a quinol + CO2</text>
        <dbReference type="Rhea" id="RHEA:48880"/>
        <dbReference type="ChEBI" id="CHEBI:15377"/>
        <dbReference type="ChEBI" id="CHEBI:16526"/>
        <dbReference type="ChEBI" id="CHEBI:17245"/>
        <dbReference type="ChEBI" id="CHEBI:24646"/>
        <dbReference type="ChEBI" id="CHEBI:132124"/>
        <dbReference type="EC" id="1.2.5.3"/>
    </reaction>
</comment>
<comment type="cofactor">
    <cofactor evidence="3">
        <name>FAD</name>
        <dbReference type="ChEBI" id="CHEBI:57692"/>
    </cofactor>
    <text evidence="3">Binds 1 FAD per subunit.</text>
</comment>
<comment type="subunit">
    <text evidence="3">Dimer of heterotrimers. Each heterotrimer consists of a large, a medium and a small subunit.</text>
</comment>
<protein>
    <recommendedName>
        <fullName>Carbon monoxide dehydrogenase medium chain</fullName>
        <shortName>CO dehydrogenase subunit M</shortName>
        <shortName>CO-DH M</shortName>
        <ecNumber evidence="1">1.2.5.3</ecNumber>
    </recommendedName>
</protein>